<comment type="function">
    <text evidence="1">Metallothioneins have a high content of cysteine residues that bind various heavy metals.</text>
</comment>
<comment type="domain">
    <text>Class I metallothioneins contain 2 metal-binding domains: four divalent ions are chelated within cluster A of the alpha domain and are coordinated via cysteinyl thiolate bridges to 11 cysteine ligands. Cluster B, the corresponding region within the beta domain, can ligate three divalent ions to 9 cysteines.</text>
</comment>
<comment type="similarity">
    <text evidence="4">Belongs to the metallothionein superfamily. Type 1 family.</text>
</comment>
<gene>
    <name type="primary">mt</name>
</gene>
<sequence length="60" mass="6009">MDPCECSKTGNCTCGGSCTCKNCSCTSCKKSCCSCCPSGCSKCASGCVCKGKTCDTSCCQ</sequence>
<name>MT_GOBCO</name>
<feature type="chain" id="PRO_0000197285" description="Metallothionein">
    <location>
        <begin position="1"/>
        <end position="60"/>
    </location>
</feature>
<feature type="region of interest" description="Beta">
    <location>
        <begin position="1"/>
        <end position="28"/>
    </location>
</feature>
<feature type="region of interest" description="Alpha">
    <location>
        <begin position="29"/>
        <end position="60"/>
    </location>
</feature>
<feature type="binding site" evidence="2">
    <location>
        <position position="4"/>
    </location>
    <ligand>
        <name>a divalent metal cation</name>
        <dbReference type="ChEBI" id="CHEBI:60240"/>
        <label>1</label>
        <note>in cluster B</note>
    </ligand>
</feature>
<feature type="binding site" evidence="2">
    <location>
        <position position="6"/>
    </location>
    <ligand>
        <name>a divalent metal cation</name>
        <dbReference type="ChEBI" id="CHEBI:60240"/>
        <label>1</label>
        <note>in cluster B</note>
    </ligand>
</feature>
<feature type="binding site" evidence="2">
    <location>
        <position position="6"/>
    </location>
    <ligand>
        <name>a divalent metal cation</name>
        <dbReference type="ChEBI" id="CHEBI:60240"/>
        <label>2</label>
        <note>in cluster B</note>
    </ligand>
</feature>
<feature type="binding site" evidence="2">
    <location>
        <position position="12"/>
    </location>
    <ligand>
        <name>a divalent metal cation</name>
        <dbReference type="ChEBI" id="CHEBI:60240"/>
        <label>2</label>
        <note>in cluster B</note>
    </ligand>
</feature>
<feature type="binding site" evidence="2">
    <location>
        <position position="14"/>
    </location>
    <ligand>
        <name>a divalent metal cation</name>
        <dbReference type="ChEBI" id="CHEBI:60240"/>
        <label>2</label>
        <note>in cluster B</note>
    </ligand>
</feature>
<feature type="binding site" evidence="2">
    <location>
        <position position="14"/>
    </location>
    <ligand>
        <name>a divalent metal cation</name>
        <dbReference type="ChEBI" id="CHEBI:60240"/>
        <label>3</label>
        <note>in cluster B</note>
    </ligand>
</feature>
<feature type="binding site" evidence="2">
    <location>
        <position position="18"/>
    </location>
    <ligand>
        <name>a divalent metal cation</name>
        <dbReference type="ChEBI" id="CHEBI:60240"/>
        <label>3</label>
        <note>in cluster B</note>
    </ligand>
</feature>
<feature type="binding site" evidence="2">
    <location>
        <position position="20"/>
    </location>
    <ligand>
        <name>a divalent metal cation</name>
        <dbReference type="ChEBI" id="CHEBI:60240"/>
        <label>1</label>
        <note>in cluster B</note>
    </ligand>
</feature>
<feature type="binding site" evidence="2">
    <location>
        <position position="23"/>
    </location>
    <ligand>
        <name>a divalent metal cation</name>
        <dbReference type="ChEBI" id="CHEBI:60240"/>
        <label>1</label>
        <note>in cluster B</note>
    </ligand>
</feature>
<feature type="binding site" evidence="2">
    <location>
        <position position="23"/>
    </location>
    <ligand>
        <name>a divalent metal cation</name>
        <dbReference type="ChEBI" id="CHEBI:60240"/>
        <label>3</label>
        <note>in cluster B</note>
    </ligand>
</feature>
<feature type="binding site" evidence="2">
    <location>
        <position position="25"/>
    </location>
    <ligand>
        <name>a divalent metal cation</name>
        <dbReference type="ChEBI" id="CHEBI:60240"/>
        <label>2</label>
        <note>in cluster B</note>
    </ligand>
</feature>
<feature type="binding site" evidence="2">
    <location>
        <position position="28"/>
    </location>
    <ligand>
        <name>a divalent metal cation</name>
        <dbReference type="ChEBI" id="CHEBI:60240"/>
        <label>3</label>
        <note>in cluster B</note>
    </ligand>
</feature>
<feature type="binding site" evidence="2">
    <location>
        <position position="32"/>
    </location>
    <ligand>
        <name>a divalent metal cation</name>
        <dbReference type="ChEBI" id="CHEBI:60240"/>
        <label>4</label>
        <note>in cluster A</note>
    </ligand>
</feature>
<feature type="binding site" evidence="2">
    <location>
        <position position="33"/>
    </location>
    <ligand>
        <name>a divalent metal cation</name>
        <dbReference type="ChEBI" id="CHEBI:60240"/>
        <label>4</label>
        <note>in cluster A</note>
    </ligand>
</feature>
<feature type="binding site" evidence="2">
    <location>
        <position position="33"/>
    </location>
    <ligand>
        <name>a divalent metal cation</name>
        <dbReference type="ChEBI" id="CHEBI:60240"/>
        <label>5</label>
        <note>in cluster A</note>
    </ligand>
</feature>
<feature type="binding site" evidence="2">
    <location>
        <position position="35"/>
    </location>
    <ligand>
        <name>a divalent metal cation</name>
        <dbReference type="ChEBI" id="CHEBI:60240"/>
        <label>5</label>
        <note>in cluster A</note>
    </ligand>
</feature>
<feature type="binding site" evidence="2">
    <location>
        <position position="36"/>
    </location>
    <ligand>
        <name>a divalent metal cation</name>
        <dbReference type="ChEBI" id="CHEBI:60240"/>
        <label>5</label>
        <note>in cluster A</note>
    </ligand>
</feature>
<feature type="binding site" evidence="2">
    <location>
        <position position="36"/>
    </location>
    <ligand>
        <name>a divalent metal cation</name>
        <dbReference type="ChEBI" id="CHEBI:60240"/>
        <label>6</label>
        <note>in cluster A</note>
    </ligand>
</feature>
<feature type="binding site" evidence="2">
    <location>
        <position position="40"/>
    </location>
    <ligand>
        <name>a divalent metal cation</name>
        <dbReference type="ChEBI" id="CHEBI:60240"/>
        <label>6</label>
        <note>in cluster A</note>
    </ligand>
</feature>
<feature type="binding site" evidence="2">
    <location>
        <position position="43"/>
    </location>
    <ligand>
        <name>a divalent metal cation</name>
        <dbReference type="ChEBI" id="CHEBI:60240"/>
        <label>4</label>
        <note>in cluster A</note>
    </ligand>
</feature>
<feature type="binding site" evidence="2">
    <location>
        <position position="43"/>
    </location>
    <ligand>
        <name>a divalent metal cation</name>
        <dbReference type="ChEBI" id="CHEBI:60240"/>
        <label>6</label>
        <note>in cluster A</note>
    </ligand>
</feature>
<feature type="binding site" evidence="2">
    <location>
        <position position="47"/>
    </location>
    <ligand>
        <name>a divalent metal cation</name>
        <dbReference type="ChEBI" id="CHEBI:60240"/>
        <label>4</label>
        <note>in cluster A</note>
    </ligand>
</feature>
<feature type="binding site" evidence="2">
    <location>
        <position position="49"/>
    </location>
    <ligand>
        <name>a divalent metal cation</name>
        <dbReference type="ChEBI" id="CHEBI:60240"/>
        <label>5</label>
        <note>in cluster A</note>
    </ligand>
</feature>
<feature type="binding site" evidence="2">
    <location>
        <position position="49"/>
    </location>
    <ligand>
        <name>a divalent metal cation</name>
        <dbReference type="ChEBI" id="CHEBI:60240"/>
        <label>7</label>
        <note>in cluster A</note>
    </ligand>
</feature>
<feature type="binding site" evidence="3">
    <location>
        <position position="54"/>
    </location>
    <ligand>
        <name>a divalent metal cation</name>
        <dbReference type="ChEBI" id="CHEBI:60240"/>
        <label>7</label>
        <note>in cluster A</note>
    </ligand>
</feature>
<feature type="binding site" evidence="2">
    <location>
        <position position="58"/>
    </location>
    <ligand>
        <name>a divalent metal cation</name>
        <dbReference type="ChEBI" id="CHEBI:60240"/>
        <label>7</label>
        <note>in cluster A</note>
    </ligand>
</feature>
<feature type="binding site" evidence="2">
    <location>
        <position position="59"/>
    </location>
    <ligand>
        <name>a divalent metal cation</name>
        <dbReference type="ChEBI" id="CHEBI:60240"/>
        <label>6</label>
        <note>in cluster A</note>
    </ligand>
</feature>
<feature type="binding site" evidence="2">
    <location>
        <position position="59"/>
    </location>
    <ligand>
        <name>a divalent metal cation</name>
        <dbReference type="ChEBI" id="CHEBI:60240"/>
        <label>7</label>
        <note>in cluster A</note>
    </ligand>
</feature>
<reference key="1">
    <citation type="submission" date="2003-02" db="EMBL/GenBank/DDBJ databases">
        <title>Measurement of metallothionein expression in the New Zealand common bully (Gobiomorphus cotidianus).</title>
        <authorList>
            <person name="Laurie A.D."/>
        </authorList>
    </citation>
    <scope>NUCLEOTIDE SEQUENCE [MRNA]</scope>
    <source>
        <tissue>Liver</tissue>
    </source>
</reference>
<protein>
    <recommendedName>
        <fullName>Metallothionein</fullName>
        <shortName>MT</shortName>
    </recommendedName>
</protein>
<dbReference type="EMBL" id="AY239389">
    <property type="protein sequence ID" value="AAO89258.1"/>
    <property type="molecule type" value="mRNA"/>
</dbReference>
<dbReference type="GO" id="GO:0046872">
    <property type="term" value="F:metal ion binding"/>
    <property type="evidence" value="ECO:0007669"/>
    <property type="project" value="UniProtKB-KW"/>
</dbReference>
<dbReference type="FunFam" id="4.10.10.10:FF:000001">
    <property type="entry name" value="Metallothionein"/>
    <property type="match status" value="1"/>
</dbReference>
<dbReference type="Gene3D" id="4.10.10.10">
    <property type="entry name" value="Metallothionein Isoform II"/>
    <property type="match status" value="1"/>
</dbReference>
<dbReference type="InterPro" id="IPR017854">
    <property type="entry name" value="Metalthion_dom_sf"/>
</dbReference>
<dbReference type="InterPro" id="IPR023587">
    <property type="entry name" value="Metalthion_dom_sf_vert"/>
</dbReference>
<dbReference type="InterPro" id="IPR000006">
    <property type="entry name" value="Metalthion_vert"/>
</dbReference>
<dbReference type="InterPro" id="IPR018064">
    <property type="entry name" value="Metalthion_vert_metal_BS"/>
</dbReference>
<dbReference type="PANTHER" id="PTHR23299">
    <property type="entry name" value="METALLOTHIONEIN"/>
    <property type="match status" value="1"/>
</dbReference>
<dbReference type="PANTHER" id="PTHR23299:SF24">
    <property type="entry name" value="METALLOTHIONEIN-1X"/>
    <property type="match status" value="1"/>
</dbReference>
<dbReference type="Pfam" id="PF00131">
    <property type="entry name" value="Metallothio"/>
    <property type="match status" value="1"/>
</dbReference>
<dbReference type="PRINTS" id="PR00860">
    <property type="entry name" value="MTVERTEBRATE"/>
</dbReference>
<dbReference type="SUPFAM" id="SSF57868">
    <property type="entry name" value="Metallothionein"/>
    <property type="match status" value="1"/>
</dbReference>
<dbReference type="PROSITE" id="PS00203">
    <property type="entry name" value="METALLOTHIONEIN_VRT"/>
    <property type="match status" value="1"/>
</dbReference>
<organism>
    <name type="scientific">Gobiomorphus cotidianus</name>
    <name type="common">New Zealand common bully</name>
    <dbReference type="NCBI Taxonomy" id="226931"/>
    <lineage>
        <taxon>Eukaryota</taxon>
        <taxon>Metazoa</taxon>
        <taxon>Chordata</taxon>
        <taxon>Craniata</taxon>
        <taxon>Vertebrata</taxon>
        <taxon>Euteleostomi</taxon>
        <taxon>Actinopterygii</taxon>
        <taxon>Neopterygii</taxon>
        <taxon>Teleostei</taxon>
        <taxon>Neoteleostei</taxon>
        <taxon>Acanthomorphata</taxon>
        <taxon>Gobiaria</taxon>
        <taxon>Gobiiformes</taxon>
        <taxon>Eleotroidei</taxon>
        <taxon>Eleotridae</taxon>
        <taxon>Eleotrinae</taxon>
        <taxon>Gobiomorphus</taxon>
    </lineage>
</organism>
<accession>Q800D3</accession>
<evidence type="ECO:0000250" key="1"/>
<evidence type="ECO:0000250" key="2">
    <source>
        <dbReference type="UniProtKB" id="P02795"/>
    </source>
</evidence>
<evidence type="ECO:0000250" key="3">
    <source>
        <dbReference type="UniProtKB" id="P62339"/>
    </source>
</evidence>
<evidence type="ECO:0000305" key="4"/>
<keyword id="KW-0479">Metal-binding</keyword>
<keyword id="KW-0480">Metal-thiolate cluster</keyword>
<proteinExistence type="inferred from homology"/>